<protein>
    <recommendedName>
        <fullName evidence="1">ATP synthase epsilon chain</fullName>
    </recommendedName>
    <alternativeName>
        <fullName evidence="1">ATP synthase F1 sector epsilon subunit</fullName>
    </alternativeName>
    <alternativeName>
        <fullName evidence="1">F-ATPase epsilon subunit</fullName>
    </alternativeName>
</protein>
<name>ATPE_STAAC</name>
<gene>
    <name evidence="1" type="primary">atpC</name>
    <name type="ordered locus">SACOL2094</name>
</gene>
<comment type="function">
    <text evidence="1">Produces ATP from ADP in the presence of a proton gradient across the membrane.</text>
</comment>
<comment type="subunit">
    <text>F-type ATPases have 2 components, CF(1) - the catalytic core - and CF(0) - the membrane proton channel. CF(1) has five subunits: alpha(3), beta(3), gamma(1), delta(1), epsilon(1). CF(0) has three main subunits: a, b and c.</text>
</comment>
<comment type="subcellular location">
    <subcellularLocation>
        <location evidence="1">Cell membrane</location>
        <topology evidence="1">Peripheral membrane protein</topology>
    </subcellularLocation>
</comment>
<comment type="similarity">
    <text evidence="1">Belongs to the ATPase epsilon chain family.</text>
</comment>
<sequence length="134" mass="14844">MNTLNLDIVTPNGSVYNRDNVELVVMQTTAGEIGVMSGHIPTVAALKTGFVKVKFHDGTEYIAVSDGFVEVRKDKVSIIVQTAETAREIDVERAKLAKARAESHLENDDDNTDIHRAERALERANNRLRVAELK</sequence>
<organism>
    <name type="scientific">Staphylococcus aureus (strain COL)</name>
    <dbReference type="NCBI Taxonomy" id="93062"/>
    <lineage>
        <taxon>Bacteria</taxon>
        <taxon>Bacillati</taxon>
        <taxon>Bacillota</taxon>
        <taxon>Bacilli</taxon>
        <taxon>Bacillales</taxon>
        <taxon>Staphylococcaceae</taxon>
        <taxon>Staphylococcus</taxon>
    </lineage>
</organism>
<feature type="chain" id="PRO_0000188200" description="ATP synthase epsilon chain">
    <location>
        <begin position="1"/>
        <end position="134"/>
    </location>
</feature>
<dbReference type="EMBL" id="CP000046">
    <property type="protein sequence ID" value="AAW38404.1"/>
    <property type="molecule type" value="Genomic_DNA"/>
</dbReference>
<dbReference type="RefSeq" id="WP_001094394.1">
    <property type="nucleotide sequence ID" value="NZ_JBGOFO010000007.1"/>
</dbReference>
<dbReference type="SMR" id="Q5HE98"/>
<dbReference type="KEGG" id="sac:SACOL2094"/>
<dbReference type="HOGENOM" id="CLU_084338_1_3_9"/>
<dbReference type="Proteomes" id="UP000000530">
    <property type="component" value="Chromosome"/>
</dbReference>
<dbReference type="GO" id="GO:0005886">
    <property type="term" value="C:plasma membrane"/>
    <property type="evidence" value="ECO:0007669"/>
    <property type="project" value="UniProtKB-SubCell"/>
</dbReference>
<dbReference type="GO" id="GO:0045259">
    <property type="term" value="C:proton-transporting ATP synthase complex"/>
    <property type="evidence" value="ECO:0007669"/>
    <property type="project" value="UniProtKB-KW"/>
</dbReference>
<dbReference type="GO" id="GO:0005524">
    <property type="term" value="F:ATP binding"/>
    <property type="evidence" value="ECO:0007669"/>
    <property type="project" value="UniProtKB-UniRule"/>
</dbReference>
<dbReference type="GO" id="GO:0046933">
    <property type="term" value="F:proton-transporting ATP synthase activity, rotational mechanism"/>
    <property type="evidence" value="ECO:0007669"/>
    <property type="project" value="UniProtKB-UniRule"/>
</dbReference>
<dbReference type="CDD" id="cd12152">
    <property type="entry name" value="F1-ATPase_delta"/>
    <property type="match status" value="1"/>
</dbReference>
<dbReference type="FunFam" id="1.20.5.440:FF:000001">
    <property type="entry name" value="ATP synthase epsilon chain"/>
    <property type="match status" value="1"/>
</dbReference>
<dbReference type="FunFam" id="2.60.15.10:FF:000001">
    <property type="entry name" value="ATP synthase epsilon chain"/>
    <property type="match status" value="1"/>
</dbReference>
<dbReference type="Gene3D" id="1.20.5.440">
    <property type="entry name" value="ATP synthase delta/epsilon subunit, C-terminal domain"/>
    <property type="match status" value="1"/>
</dbReference>
<dbReference type="Gene3D" id="2.60.15.10">
    <property type="entry name" value="F0F1 ATP synthase delta/epsilon subunit, N-terminal"/>
    <property type="match status" value="1"/>
</dbReference>
<dbReference type="HAMAP" id="MF_00530">
    <property type="entry name" value="ATP_synth_epsil_bac"/>
    <property type="match status" value="1"/>
</dbReference>
<dbReference type="InterPro" id="IPR036794">
    <property type="entry name" value="ATP_F1_dsu/esu_C_sf"/>
</dbReference>
<dbReference type="InterPro" id="IPR001469">
    <property type="entry name" value="ATP_synth_F1_dsu/esu"/>
</dbReference>
<dbReference type="InterPro" id="IPR020546">
    <property type="entry name" value="ATP_synth_F1_dsu/esu_N"/>
</dbReference>
<dbReference type="InterPro" id="IPR020547">
    <property type="entry name" value="ATP_synth_F1_esu_C"/>
</dbReference>
<dbReference type="InterPro" id="IPR036771">
    <property type="entry name" value="ATPsynth_dsu/esu_N"/>
</dbReference>
<dbReference type="NCBIfam" id="TIGR01216">
    <property type="entry name" value="ATP_synt_epsi"/>
    <property type="match status" value="1"/>
</dbReference>
<dbReference type="NCBIfam" id="NF001846">
    <property type="entry name" value="PRK00571.1-3"/>
    <property type="match status" value="1"/>
</dbReference>
<dbReference type="NCBIfam" id="NF009980">
    <property type="entry name" value="PRK13446.1"/>
    <property type="match status" value="1"/>
</dbReference>
<dbReference type="PANTHER" id="PTHR13822">
    <property type="entry name" value="ATP SYNTHASE DELTA/EPSILON CHAIN"/>
    <property type="match status" value="1"/>
</dbReference>
<dbReference type="PANTHER" id="PTHR13822:SF10">
    <property type="entry name" value="ATP SYNTHASE EPSILON CHAIN, CHLOROPLASTIC"/>
    <property type="match status" value="1"/>
</dbReference>
<dbReference type="Pfam" id="PF00401">
    <property type="entry name" value="ATP-synt_DE"/>
    <property type="match status" value="1"/>
</dbReference>
<dbReference type="Pfam" id="PF02823">
    <property type="entry name" value="ATP-synt_DE_N"/>
    <property type="match status" value="1"/>
</dbReference>
<dbReference type="SUPFAM" id="SSF46604">
    <property type="entry name" value="Epsilon subunit of F1F0-ATP synthase C-terminal domain"/>
    <property type="match status" value="1"/>
</dbReference>
<dbReference type="SUPFAM" id="SSF51344">
    <property type="entry name" value="Epsilon subunit of F1F0-ATP synthase N-terminal domain"/>
    <property type="match status" value="1"/>
</dbReference>
<keyword id="KW-0066">ATP synthesis</keyword>
<keyword id="KW-1003">Cell membrane</keyword>
<keyword id="KW-0139">CF(1)</keyword>
<keyword id="KW-0375">Hydrogen ion transport</keyword>
<keyword id="KW-0406">Ion transport</keyword>
<keyword id="KW-0472">Membrane</keyword>
<keyword id="KW-0813">Transport</keyword>
<reference key="1">
    <citation type="journal article" date="2005" name="J. Bacteriol.">
        <title>Insights on evolution of virulence and resistance from the complete genome analysis of an early methicillin-resistant Staphylococcus aureus strain and a biofilm-producing methicillin-resistant Staphylococcus epidermidis strain.</title>
        <authorList>
            <person name="Gill S.R."/>
            <person name="Fouts D.E."/>
            <person name="Archer G.L."/>
            <person name="Mongodin E.F."/>
            <person name="DeBoy R.T."/>
            <person name="Ravel J."/>
            <person name="Paulsen I.T."/>
            <person name="Kolonay J.F."/>
            <person name="Brinkac L.M."/>
            <person name="Beanan M.J."/>
            <person name="Dodson R.J."/>
            <person name="Daugherty S.C."/>
            <person name="Madupu R."/>
            <person name="Angiuoli S.V."/>
            <person name="Durkin A.S."/>
            <person name="Haft D.H."/>
            <person name="Vamathevan J.J."/>
            <person name="Khouri H."/>
            <person name="Utterback T.R."/>
            <person name="Lee C."/>
            <person name="Dimitrov G."/>
            <person name="Jiang L."/>
            <person name="Qin H."/>
            <person name="Weidman J."/>
            <person name="Tran K."/>
            <person name="Kang K.H."/>
            <person name="Hance I.R."/>
            <person name="Nelson K.E."/>
            <person name="Fraser C.M."/>
        </authorList>
    </citation>
    <scope>NUCLEOTIDE SEQUENCE [LARGE SCALE GENOMIC DNA]</scope>
    <source>
        <strain>COL</strain>
    </source>
</reference>
<accession>Q5HE98</accession>
<evidence type="ECO:0000255" key="1">
    <source>
        <dbReference type="HAMAP-Rule" id="MF_00530"/>
    </source>
</evidence>
<proteinExistence type="inferred from homology"/>